<gene>
    <name evidence="1" type="primary">rplR</name>
    <name type="ordered locus">Acid_5102</name>
</gene>
<accession>Q01WA8</accession>
<feature type="chain" id="PRO_1000053116" description="Large ribosomal subunit protein uL18">
    <location>
        <begin position="1"/>
        <end position="119"/>
    </location>
</feature>
<comment type="function">
    <text evidence="1">This is one of the proteins that bind and probably mediate the attachment of the 5S RNA into the large ribosomal subunit, where it forms part of the central protuberance.</text>
</comment>
<comment type="subunit">
    <text evidence="1">Part of the 50S ribosomal subunit; part of the 5S rRNA/L5/L18/L25 subcomplex. Contacts the 5S and 23S rRNAs.</text>
</comment>
<comment type="similarity">
    <text evidence="1">Belongs to the universal ribosomal protein uL18 family.</text>
</comment>
<proteinExistence type="inferred from homology"/>
<protein>
    <recommendedName>
        <fullName evidence="1">Large ribosomal subunit protein uL18</fullName>
    </recommendedName>
    <alternativeName>
        <fullName evidence="2">50S ribosomal protein L18</fullName>
    </alternativeName>
</protein>
<evidence type="ECO:0000255" key="1">
    <source>
        <dbReference type="HAMAP-Rule" id="MF_01337"/>
    </source>
</evidence>
<evidence type="ECO:0000305" key="2"/>
<sequence length="119" mass="13113">MIRKIEKKEIRNRIHRRIRRKLSGTAERPRLAVFRSVAHIYAQVIDDAQGQTLVSASSVDKDGKSKGGNVAAAKAIGKLVAERAKEKGIKSVVFDRGGYQYHGRVKALADAAREAGLEF</sequence>
<dbReference type="EMBL" id="CP000473">
    <property type="protein sequence ID" value="ABJ86057.1"/>
    <property type="molecule type" value="Genomic_DNA"/>
</dbReference>
<dbReference type="SMR" id="Q01WA8"/>
<dbReference type="FunCoup" id="Q01WA8">
    <property type="interactions" value="689"/>
</dbReference>
<dbReference type="STRING" id="234267.Acid_5102"/>
<dbReference type="KEGG" id="sus:Acid_5102"/>
<dbReference type="eggNOG" id="COG0256">
    <property type="taxonomic scope" value="Bacteria"/>
</dbReference>
<dbReference type="HOGENOM" id="CLU_098841_0_1_0"/>
<dbReference type="InParanoid" id="Q01WA8"/>
<dbReference type="OrthoDB" id="9810939at2"/>
<dbReference type="GO" id="GO:0022625">
    <property type="term" value="C:cytosolic large ribosomal subunit"/>
    <property type="evidence" value="ECO:0007669"/>
    <property type="project" value="TreeGrafter"/>
</dbReference>
<dbReference type="GO" id="GO:0008097">
    <property type="term" value="F:5S rRNA binding"/>
    <property type="evidence" value="ECO:0007669"/>
    <property type="project" value="TreeGrafter"/>
</dbReference>
<dbReference type="GO" id="GO:0003735">
    <property type="term" value="F:structural constituent of ribosome"/>
    <property type="evidence" value="ECO:0007669"/>
    <property type="project" value="InterPro"/>
</dbReference>
<dbReference type="GO" id="GO:0006412">
    <property type="term" value="P:translation"/>
    <property type="evidence" value="ECO:0007669"/>
    <property type="project" value="UniProtKB-UniRule"/>
</dbReference>
<dbReference type="CDD" id="cd00432">
    <property type="entry name" value="Ribosomal_L18_L5e"/>
    <property type="match status" value="1"/>
</dbReference>
<dbReference type="FunFam" id="3.30.420.100:FF:000001">
    <property type="entry name" value="50S ribosomal protein L18"/>
    <property type="match status" value="1"/>
</dbReference>
<dbReference type="Gene3D" id="3.30.420.100">
    <property type="match status" value="1"/>
</dbReference>
<dbReference type="HAMAP" id="MF_01337_B">
    <property type="entry name" value="Ribosomal_uL18_B"/>
    <property type="match status" value="1"/>
</dbReference>
<dbReference type="InterPro" id="IPR004389">
    <property type="entry name" value="Ribosomal_uL18_bac-type"/>
</dbReference>
<dbReference type="InterPro" id="IPR005484">
    <property type="entry name" value="Ribosomal_uL18_bac/euk"/>
</dbReference>
<dbReference type="NCBIfam" id="TIGR00060">
    <property type="entry name" value="L18_bact"/>
    <property type="match status" value="1"/>
</dbReference>
<dbReference type="PANTHER" id="PTHR12899">
    <property type="entry name" value="39S RIBOSOMAL PROTEIN L18, MITOCHONDRIAL"/>
    <property type="match status" value="1"/>
</dbReference>
<dbReference type="PANTHER" id="PTHR12899:SF3">
    <property type="entry name" value="LARGE RIBOSOMAL SUBUNIT PROTEIN UL18M"/>
    <property type="match status" value="1"/>
</dbReference>
<dbReference type="Pfam" id="PF00861">
    <property type="entry name" value="Ribosomal_L18p"/>
    <property type="match status" value="1"/>
</dbReference>
<dbReference type="SUPFAM" id="SSF53137">
    <property type="entry name" value="Translational machinery components"/>
    <property type="match status" value="1"/>
</dbReference>
<keyword id="KW-0687">Ribonucleoprotein</keyword>
<keyword id="KW-0689">Ribosomal protein</keyword>
<keyword id="KW-0694">RNA-binding</keyword>
<keyword id="KW-0699">rRNA-binding</keyword>
<organism>
    <name type="scientific">Solibacter usitatus (strain Ellin6076)</name>
    <dbReference type="NCBI Taxonomy" id="234267"/>
    <lineage>
        <taxon>Bacteria</taxon>
        <taxon>Pseudomonadati</taxon>
        <taxon>Acidobacteriota</taxon>
        <taxon>Terriglobia</taxon>
        <taxon>Bryobacterales</taxon>
        <taxon>Solibacteraceae</taxon>
        <taxon>Candidatus Solibacter</taxon>
    </lineage>
</organism>
<name>RL18_SOLUE</name>
<reference key="1">
    <citation type="journal article" date="2009" name="Appl. Environ. Microbiol.">
        <title>Three genomes from the phylum Acidobacteria provide insight into the lifestyles of these microorganisms in soils.</title>
        <authorList>
            <person name="Ward N.L."/>
            <person name="Challacombe J.F."/>
            <person name="Janssen P.H."/>
            <person name="Henrissat B."/>
            <person name="Coutinho P.M."/>
            <person name="Wu M."/>
            <person name="Xie G."/>
            <person name="Haft D.H."/>
            <person name="Sait M."/>
            <person name="Badger J."/>
            <person name="Barabote R.D."/>
            <person name="Bradley B."/>
            <person name="Brettin T.S."/>
            <person name="Brinkac L.M."/>
            <person name="Bruce D."/>
            <person name="Creasy T."/>
            <person name="Daugherty S.C."/>
            <person name="Davidsen T.M."/>
            <person name="DeBoy R.T."/>
            <person name="Detter J.C."/>
            <person name="Dodson R.J."/>
            <person name="Durkin A.S."/>
            <person name="Ganapathy A."/>
            <person name="Gwinn-Giglio M."/>
            <person name="Han C.S."/>
            <person name="Khouri H."/>
            <person name="Kiss H."/>
            <person name="Kothari S.P."/>
            <person name="Madupu R."/>
            <person name="Nelson K.E."/>
            <person name="Nelson W.C."/>
            <person name="Paulsen I."/>
            <person name="Penn K."/>
            <person name="Ren Q."/>
            <person name="Rosovitz M.J."/>
            <person name="Selengut J.D."/>
            <person name="Shrivastava S."/>
            <person name="Sullivan S.A."/>
            <person name="Tapia R."/>
            <person name="Thompson L.S."/>
            <person name="Watkins K.L."/>
            <person name="Yang Q."/>
            <person name="Yu C."/>
            <person name="Zafar N."/>
            <person name="Zhou L."/>
            <person name="Kuske C.R."/>
        </authorList>
    </citation>
    <scope>NUCLEOTIDE SEQUENCE [LARGE SCALE GENOMIC DNA]</scope>
    <source>
        <strain>Ellin6076</strain>
    </source>
</reference>